<gene>
    <name type="ordered locus">BMA3398</name>
</gene>
<evidence type="ECO:0000255" key="1">
    <source>
        <dbReference type="HAMAP-Rule" id="MF_00386"/>
    </source>
</evidence>
<evidence type="ECO:0000256" key="2">
    <source>
        <dbReference type="SAM" id="MobiDB-lite"/>
    </source>
</evidence>
<evidence type="ECO:0000305" key="3"/>
<protein>
    <recommendedName>
        <fullName evidence="1">Putative membrane protein insertion efficiency factor</fullName>
    </recommendedName>
</protein>
<proteinExistence type="inferred from homology"/>
<comment type="function">
    <text evidence="1">Could be involved in insertion of integral membrane proteins into the membrane.</text>
</comment>
<comment type="subcellular location">
    <subcellularLocation>
        <location evidence="1">Cell inner membrane</location>
        <topology evidence="1">Peripheral membrane protein</topology>
        <orientation evidence="1">Cytoplasmic side</orientation>
    </subcellularLocation>
</comment>
<comment type="similarity">
    <text evidence="1">Belongs to the UPF0161 family.</text>
</comment>
<comment type="sequence caution" evidence="3">
    <conflict type="erroneous initiation">
        <sequence resource="EMBL-CDS" id="AAU48915"/>
    </conflict>
</comment>
<organism>
    <name type="scientific">Burkholderia mallei (strain ATCC 23344)</name>
    <dbReference type="NCBI Taxonomy" id="243160"/>
    <lineage>
        <taxon>Bacteria</taxon>
        <taxon>Pseudomonadati</taxon>
        <taxon>Pseudomonadota</taxon>
        <taxon>Betaproteobacteria</taxon>
        <taxon>Burkholderiales</taxon>
        <taxon>Burkholderiaceae</taxon>
        <taxon>Burkholderia</taxon>
        <taxon>pseudomallei group</taxon>
    </lineage>
</organism>
<name>YIDD_BURMA</name>
<sequence>MQTVLIALLRFYKLAVSPLLGSRCRFYPSCSDYAREAIQYHGAARGTYLAARRLCRCHPFSAGGVDLVPPPNSDARNAPHEAEASSHRL</sequence>
<dbReference type="EMBL" id="CP000010">
    <property type="protein sequence ID" value="AAU48915.1"/>
    <property type="status" value="ALT_INIT"/>
    <property type="molecule type" value="Genomic_DNA"/>
</dbReference>
<dbReference type="RefSeq" id="YP_104855.1">
    <property type="nucleotide sequence ID" value="NC_006348.1"/>
</dbReference>
<dbReference type="KEGG" id="bma:BMA3398"/>
<dbReference type="PATRIC" id="fig|243160.12.peg.3488"/>
<dbReference type="eggNOG" id="COG0759">
    <property type="taxonomic scope" value="Bacteria"/>
</dbReference>
<dbReference type="HOGENOM" id="CLU_144811_2_2_4"/>
<dbReference type="Proteomes" id="UP000006693">
    <property type="component" value="Chromosome 1"/>
</dbReference>
<dbReference type="GO" id="GO:0005886">
    <property type="term" value="C:plasma membrane"/>
    <property type="evidence" value="ECO:0007669"/>
    <property type="project" value="UniProtKB-SubCell"/>
</dbReference>
<dbReference type="HAMAP" id="MF_00386">
    <property type="entry name" value="UPF0161_YidD"/>
    <property type="match status" value="1"/>
</dbReference>
<dbReference type="InterPro" id="IPR002696">
    <property type="entry name" value="Membr_insert_effic_factor_YidD"/>
</dbReference>
<dbReference type="NCBIfam" id="TIGR00278">
    <property type="entry name" value="membrane protein insertion efficiency factor YidD"/>
    <property type="match status" value="1"/>
</dbReference>
<dbReference type="PANTHER" id="PTHR33383">
    <property type="entry name" value="MEMBRANE PROTEIN INSERTION EFFICIENCY FACTOR-RELATED"/>
    <property type="match status" value="1"/>
</dbReference>
<dbReference type="PANTHER" id="PTHR33383:SF1">
    <property type="entry name" value="MEMBRANE PROTEIN INSERTION EFFICIENCY FACTOR-RELATED"/>
    <property type="match status" value="1"/>
</dbReference>
<dbReference type="Pfam" id="PF01809">
    <property type="entry name" value="YidD"/>
    <property type="match status" value="1"/>
</dbReference>
<dbReference type="SMART" id="SM01234">
    <property type="entry name" value="Haemolytic"/>
    <property type="match status" value="1"/>
</dbReference>
<feature type="chain" id="PRO_0000253087" description="Putative membrane protein insertion efficiency factor">
    <location>
        <begin position="1"/>
        <end position="89"/>
    </location>
</feature>
<feature type="region of interest" description="Disordered" evidence="2">
    <location>
        <begin position="68"/>
        <end position="89"/>
    </location>
</feature>
<feature type="compositionally biased region" description="Basic and acidic residues" evidence="2">
    <location>
        <begin position="77"/>
        <end position="89"/>
    </location>
</feature>
<accession>Q62EM3</accession>
<keyword id="KW-0997">Cell inner membrane</keyword>
<keyword id="KW-1003">Cell membrane</keyword>
<keyword id="KW-0472">Membrane</keyword>
<keyword id="KW-1185">Reference proteome</keyword>
<reference key="1">
    <citation type="journal article" date="2004" name="Proc. Natl. Acad. Sci. U.S.A.">
        <title>Structural flexibility in the Burkholderia mallei genome.</title>
        <authorList>
            <person name="Nierman W.C."/>
            <person name="DeShazer D."/>
            <person name="Kim H.S."/>
            <person name="Tettelin H."/>
            <person name="Nelson K.E."/>
            <person name="Feldblyum T.V."/>
            <person name="Ulrich R.L."/>
            <person name="Ronning C.M."/>
            <person name="Brinkac L.M."/>
            <person name="Daugherty S.C."/>
            <person name="Davidsen T.D."/>
            <person name="DeBoy R.T."/>
            <person name="Dimitrov G."/>
            <person name="Dodson R.J."/>
            <person name="Durkin A.S."/>
            <person name="Gwinn M.L."/>
            <person name="Haft D.H."/>
            <person name="Khouri H.M."/>
            <person name="Kolonay J.F."/>
            <person name="Madupu R."/>
            <person name="Mohammoud Y."/>
            <person name="Nelson W.C."/>
            <person name="Radune D."/>
            <person name="Romero C.M."/>
            <person name="Sarria S."/>
            <person name="Selengut J."/>
            <person name="Shamblin C."/>
            <person name="Sullivan S.A."/>
            <person name="White O."/>
            <person name="Yu Y."/>
            <person name="Zafar N."/>
            <person name="Zhou L."/>
            <person name="Fraser C.M."/>
        </authorList>
    </citation>
    <scope>NUCLEOTIDE SEQUENCE [LARGE SCALE GENOMIC DNA]</scope>
    <source>
        <strain>ATCC 23344</strain>
    </source>
</reference>